<accession>A1TJ83</accession>
<reference key="1">
    <citation type="submission" date="2006-12" db="EMBL/GenBank/DDBJ databases">
        <title>Complete sequence of Acidovorax avenae subsp. citrulli AAC00-1.</title>
        <authorList>
            <person name="Copeland A."/>
            <person name="Lucas S."/>
            <person name="Lapidus A."/>
            <person name="Barry K."/>
            <person name="Detter J.C."/>
            <person name="Glavina del Rio T."/>
            <person name="Dalin E."/>
            <person name="Tice H."/>
            <person name="Pitluck S."/>
            <person name="Kiss H."/>
            <person name="Brettin T."/>
            <person name="Bruce D."/>
            <person name="Han C."/>
            <person name="Tapia R."/>
            <person name="Gilna P."/>
            <person name="Schmutz J."/>
            <person name="Larimer F."/>
            <person name="Land M."/>
            <person name="Hauser L."/>
            <person name="Kyrpides N."/>
            <person name="Kim E."/>
            <person name="Stahl D."/>
            <person name="Richardson P."/>
        </authorList>
    </citation>
    <scope>NUCLEOTIDE SEQUENCE [LARGE SCALE GENOMIC DNA]</scope>
    <source>
        <strain>AAC00-1</strain>
    </source>
</reference>
<sequence>MLSVKQELLAALAGELEKLSPGSAGRAAFESPKVAAHGDFACTAAMQLAKPLKLNPRALGEQLKAALEATPAFARWVDAIEIAGPGFLNIRLKAAAKQEIVREVLSAGDRFGYQKDNGQRVLVEFVSANPTGPLHVGHGRQAALGDAICNLFSTQGWSVHREFYYNDAGVQIDTLTKSTQLRARGFKPGDECWPTDPENPASKTFYNGDYIQDIANDFLAKKTVKADDREFTANGDVEDYDNIRQFAVAYLRNEQDKDLQAFNLHFDQYYLESSLYTSGRVEATVNRLVEKGHTYEQDGALWLKSTDYGDDKDRVMRKKDGTYTYFVPDVAYHIAKWERGFAKVVNIQGTDHHGTIARVRAGLQAADVGIPQGYPDYVLHTMVRVVKGGKEVKIGKRAGSYVTLRDLIEWTSKDAVRFFLLSRKPDTEYTFDVDLAVAQNNDNPVYYVQYAHARIQSVLRAWAEAGGGDVASLKDVDLSALEGPQAQALMLQLAKYPEMLTAAAEGEAPHDVTFYLRDLAASYHSYYDAERILVDDEAVKRARLALVAATAQVLHNGLKVLGVDAPARM</sequence>
<evidence type="ECO:0000255" key="1">
    <source>
        <dbReference type="HAMAP-Rule" id="MF_00123"/>
    </source>
</evidence>
<protein>
    <recommendedName>
        <fullName evidence="1">Arginine--tRNA ligase</fullName>
        <ecNumber evidence="1">6.1.1.19</ecNumber>
    </recommendedName>
    <alternativeName>
        <fullName evidence="1">Arginyl-tRNA synthetase</fullName>
        <shortName evidence="1">ArgRS</shortName>
    </alternativeName>
</protein>
<keyword id="KW-0030">Aminoacyl-tRNA synthetase</keyword>
<keyword id="KW-0067">ATP-binding</keyword>
<keyword id="KW-0963">Cytoplasm</keyword>
<keyword id="KW-0436">Ligase</keyword>
<keyword id="KW-0547">Nucleotide-binding</keyword>
<keyword id="KW-0648">Protein biosynthesis</keyword>
<name>SYR_PARC0</name>
<organism>
    <name type="scientific">Paracidovorax citrulli (strain AAC00-1)</name>
    <name type="common">Acidovorax citrulli</name>
    <dbReference type="NCBI Taxonomy" id="397945"/>
    <lineage>
        <taxon>Bacteria</taxon>
        <taxon>Pseudomonadati</taxon>
        <taxon>Pseudomonadota</taxon>
        <taxon>Betaproteobacteria</taxon>
        <taxon>Burkholderiales</taxon>
        <taxon>Comamonadaceae</taxon>
        <taxon>Paracidovorax</taxon>
    </lineage>
</organism>
<comment type="catalytic activity">
    <reaction evidence="1">
        <text>tRNA(Arg) + L-arginine + ATP = L-arginyl-tRNA(Arg) + AMP + diphosphate</text>
        <dbReference type="Rhea" id="RHEA:20301"/>
        <dbReference type="Rhea" id="RHEA-COMP:9658"/>
        <dbReference type="Rhea" id="RHEA-COMP:9673"/>
        <dbReference type="ChEBI" id="CHEBI:30616"/>
        <dbReference type="ChEBI" id="CHEBI:32682"/>
        <dbReference type="ChEBI" id="CHEBI:33019"/>
        <dbReference type="ChEBI" id="CHEBI:78442"/>
        <dbReference type="ChEBI" id="CHEBI:78513"/>
        <dbReference type="ChEBI" id="CHEBI:456215"/>
        <dbReference type="EC" id="6.1.1.19"/>
    </reaction>
</comment>
<comment type="subunit">
    <text evidence="1">Monomer.</text>
</comment>
<comment type="subcellular location">
    <subcellularLocation>
        <location evidence="1">Cytoplasm</location>
    </subcellularLocation>
</comment>
<comment type="similarity">
    <text evidence="1">Belongs to the class-I aminoacyl-tRNA synthetase family.</text>
</comment>
<feature type="chain" id="PRO_1000017982" description="Arginine--tRNA ligase">
    <location>
        <begin position="1"/>
        <end position="569"/>
    </location>
</feature>
<feature type="short sequence motif" description="'HIGH' region">
    <location>
        <begin position="128"/>
        <end position="138"/>
    </location>
</feature>
<proteinExistence type="inferred from homology"/>
<gene>
    <name evidence="1" type="primary">argS</name>
    <name type="ordered locus">Aave_0414</name>
</gene>
<dbReference type="EC" id="6.1.1.19" evidence="1"/>
<dbReference type="EMBL" id="CP000512">
    <property type="protein sequence ID" value="ABM31021.1"/>
    <property type="molecule type" value="Genomic_DNA"/>
</dbReference>
<dbReference type="RefSeq" id="WP_011793597.1">
    <property type="nucleotide sequence ID" value="NC_008752.1"/>
</dbReference>
<dbReference type="SMR" id="A1TJ83"/>
<dbReference type="STRING" id="397945.Aave_0414"/>
<dbReference type="KEGG" id="aav:Aave_0414"/>
<dbReference type="eggNOG" id="COG0018">
    <property type="taxonomic scope" value="Bacteria"/>
</dbReference>
<dbReference type="HOGENOM" id="CLU_006406_0_1_4"/>
<dbReference type="OrthoDB" id="9803211at2"/>
<dbReference type="Proteomes" id="UP000002596">
    <property type="component" value="Chromosome"/>
</dbReference>
<dbReference type="GO" id="GO:0005737">
    <property type="term" value="C:cytoplasm"/>
    <property type="evidence" value="ECO:0007669"/>
    <property type="project" value="UniProtKB-SubCell"/>
</dbReference>
<dbReference type="GO" id="GO:0004814">
    <property type="term" value="F:arginine-tRNA ligase activity"/>
    <property type="evidence" value="ECO:0007669"/>
    <property type="project" value="UniProtKB-UniRule"/>
</dbReference>
<dbReference type="GO" id="GO:0005524">
    <property type="term" value="F:ATP binding"/>
    <property type="evidence" value="ECO:0007669"/>
    <property type="project" value="UniProtKB-UniRule"/>
</dbReference>
<dbReference type="GO" id="GO:0006420">
    <property type="term" value="P:arginyl-tRNA aminoacylation"/>
    <property type="evidence" value="ECO:0007669"/>
    <property type="project" value="UniProtKB-UniRule"/>
</dbReference>
<dbReference type="CDD" id="cd07956">
    <property type="entry name" value="Anticodon_Ia_Arg"/>
    <property type="match status" value="1"/>
</dbReference>
<dbReference type="CDD" id="cd00671">
    <property type="entry name" value="ArgRS_core"/>
    <property type="match status" value="1"/>
</dbReference>
<dbReference type="FunFam" id="1.10.730.10:FF:000008">
    <property type="entry name" value="Arginine--tRNA ligase"/>
    <property type="match status" value="1"/>
</dbReference>
<dbReference type="FunFam" id="3.40.50.620:FF:000062">
    <property type="entry name" value="Arginine--tRNA ligase"/>
    <property type="match status" value="1"/>
</dbReference>
<dbReference type="Gene3D" id="3.30.1360.70">
    <property type="entry name" value="Arginyl tRNA synthetase N-terminal domain"/>
    <property type="match status" value="1"/>
</dbReference>
<dbReference type="Gene3D" id="3.40.50.620">
    <property type="entry name" value="HUPs"/>
    <property type="match status" value="1"/>
</dbReference>
<dbReference type="Gene3D" id="1.10.730.10">
    <property type="entry name" value="Isoleucyl-tRNA Synthetase, Domain 1"/>
    <property type="match status" value="1"/>
</dbReference>
<dbReference type="HAMAP" id="MF_00123">
    <property type="entry name" value="Arg_tRNA_synth"/>
    <property type="match status" value="1"/>
</dbReference>
<dbReference type="InterPro" id="IPR001412">
    <property type="entry name" value="aa-tRNA-synth_I_CS"/>
</dbReference>
<dbReference type="InterPro" id="IPR001278">
    <property type="entry name" value="Arg-tRNA-ligase"/>
</dbReference>
<dbReference type="InterPro" id="IPR005148">
    <property type="entry name" value="Arg-tRNA-synth_N"/>
</dbReference>
<dbReference type="InterPro" id="IPR036695">
    <property type="entry name" value="Arg-tRNA-synth_N_sf"/>
</dbReference>
<dbReference type="InterPro" id="IPR035684">
    <property type="entry name" value="ArgRS_core"/>
</dbReference>
<dbReference type="InterPro" id="IPR008909">
    <property type="entry name" value="DALR_anticod-bd"/>
</dbReference>
<dbReference type="InterPro" id="IPR014729">
    <property type="entry name" value="Rossmann-like_a/b/a_fold"/>
</dbReference>
<dbReference type="InterPro" id="IPR009080">
    <property type="entry name" value="tRNAsynth_Ia_anticodon-bd"/>
</dbReference>
<dbReference type="NCBIfam" id="TIGR00456">
    <property type="entry name" value="argS"/>
    <property type="match status" value="1"/>
</dbReference>
<dbReference type="PANTHER" id="PTHR11956:SF5">
    <property type="entry name" value="ARGININE--TRNA LIGASE, CYTOPLASMIC"/>
    <property type="match status" value="1"/>
</dbReference>
<dbReference type="PANTHER" id="PTHR11956">
    <property type="entry name" value="ARGINYL-TRNA SYNTHETASE"/>
    <property type="match status" value="1"/>
</dbReference>
<dbReference type="Pfam" id="PF03485">
    <property type="entry name" value="Arg_tRNA_synt_N"/>
    <property type="match status" value="1"/>
</dbReference>
<dbReference type="Pfam" id="PF05746">
    <property type="entry name" value="DALR_1"/>
    <property type="match status" value="1"/>
</dbReference>
<dbReference type="Pfam" id="PF00750">
    <property type="entry name" value="tRNA-synt_1d"/>
    <property type="match status" value="1"/>
</dbReference>
<dbReference type="PRINTS" id="PR01038">
    <property type="entry name" value="TRNASYNTHARG"/>
</dbReference>
<dbReference type="SMART" id="SM01016">
    <property type="entry name" value="Arg_tRNA_synt_N"/>
    <property type="match status" value="1"/>
</dbReference>
<dbReference type="SMART" id="SM00836">
    <property type="entry name" value="DALR_1"/>
    <property type="match status" value="1"/>
</dbReference>
<dbReference type="SUPFAM" id="SSF47323">
    <property type="entry name" value="Anticodon-binding domain of a subclass of class I aminoacyl-tRNA synthetases"/>
    <property type="match status" value="1"/>
</dbReference>
<dbReference type="SUPFAM" id="SSF55190">
    <property type="entry name" value="Arginyl-tRNA synthetase (ArgRS), N-terminal 'additional' domain"/>
    <property type="match status" value="1"/>
</dbReference>
<dbReference type="SUPFAM" id="SSF52374">
    <property type="entry name" value="Nucleotidylyl transferase"/>
    <property type="match status" value="1"/>
</dbReference>
<dbReference type="PROSITE" id="PS00178">
    <property type="entry name" value="AA_TRNA_LIGASE_I"/>
    <property type="match status" value="1"/>
</dbReference>